<comment type="subcellular location">
    <subcellularLocation>
        <location evidence="1">Mitochondrion intermembrane space</location>
    </subcellularLocation>
    <text evidence="1">Imported into the mitochondria via the mitochondrial mia40-erv1 machinery.</text>
</comment>
<comment type="induction">
    <text evidence="3">Differentially expressed during meiosis.</text>
</comment>
<comment type="domain">
    <text evidence="1">The twin Cx9C motifs are involved in the recognition by the mitochondrial mia40-erv1 disulfide relay system and the subsequent transfer of disulfide bonds by dithiol/disulfide exchange reactions to the newly imported protein.</text>
</comment>
<comment type="similarity">
    <text evidence="4">Belongs to the CMC4 family.</text>
</comment>
<proteinExistence type="evidence at protein level"/>
<dbReference type="EMBL" id="CU329670">
    <property type="protein sequence ID" value="CCD31341.1"/>
    <property type="molecule type" value="Genomic_DNA"/>
</dbReference>
<dbReference type="RefSeq" id="XP_004001796.1">
    <property type="nucleotide sequence ID" value="XM_004001747.1"/>
</dbReference>
<dbReference type="SMR" id="G2TRJ8"/>
<dbReference type="FunCoup" id="G2TRJ8">
    <property type="interactions" value="30"/>
</dbReference>
<dbReference type="STRING" id="284812.G2TRJ8"/>
<dbReference type="PaxDb" id="4896-SPAC4F10.22.1"/>
<dbReference type="EnsemblFungi" id="SPAC4F10.22.1">
    <property type="protein sequence ID" value="SPAC4F10.22.1:pep"/>
    <property type="gene ID" value="SPAC4F10.22"/>
</dbReference>
<dbReference type="PomBase" id="SPAC4F10.22">
    <property type="gene designation" value="cmc4"/>
</dbReference>
<dbReference type="VEuPathDB" id="FungiDB:SPAC4F10.22"/>
<dbReference type="HOGENOM" id="CLU_177210_0_0_1"/>
<dbReference type="InParanoid" id="G2TRJ8"/>
<dbReference type="PRO" id="PR:G2TRJ8"/>
<dbReference type="Proteomes" id="UP000002485">
    <property type="component" value="Chromosome I"/>
</dbReference>
<dbReference type="GO" id="GO:0005758">
    <property type="term" value="C:mitochondrial intermembrane space"/>
    <property type="evidence" value="ECO:0000318"/>
    <property type="project" value="GO_Central"/>
</dbReference>
<dbReference type="Gene3D" id="1.10.287.1130">
    <property type="entry name" value="CytochromE C oxidase copper chaperone"/>
    <property type="match status" value="1"/>
</dbReference>
<dbReference type="InterPro" id="IPR027179">
    <property type="entry name" value="CMC4"/>
</dbReference>
<dbReference type="InterPro" id="IPR009069">
    <property type="entry name" value="Cys_alpha_HP_mot_SF"/>
</dbReference>
<dbReference type="PANTHER" id="PTHR15590">
    <property type="entry name" value="CX9C MOTIF-CONTAINING PROTEIN 4"/>
    <property type="match status" value="1"/>
</dbReference>
<dbReference type="PANTHER" id="PTHR15590:SF0">
    <property type="entry name" value="CX9C MOTIF-CONTAINING PROTEIN 4"/>
    <property type="match status" value="1"/>
</dbReference>
<dbReference type="Pfam" id="PF08991">
    <property type="entry name" value="CMC4"/>
    <property type="match status" value="1"/>
</dbReference>
<dbReference type="SUPFAM" id="SSF47072">
    <property type="entry name" value="Cysteine alpha-hairpin motif"/>
    <property type="match status" value="1"/>
</dbReference>
<dbReference type="PROSITE" id="PS51808">
    <property type="entry name" value="CHCH"/>
    <property type="match status" value="1"/>
</dbReference>
<organism>
    <name type="scientific">Schizosaccharomyces pombe (strain 972 / ATCC 24843)</name>
    <name type="common">Fission yeast</name>
    <dbReference type="NCBI Taxonomy" id="284812"/>
    <lineage>
        <taxon>Eukaryota</taxon>
        <taxon>Fungi</taxon>
        <taxon>Dikarya</taxon>
        <taxon>Ascomycota</taxon>
        <taxon>Taphrinomycotina</taxon>
        <taxon>Schizosaccharomycetes</taxon>
        <taxon>Schizosaccharomycetales</taxon>
        <taxon>Schizosaccharomycetaceae</taxon>
        <taxon>Schizosaccharomyces</taxon>
    </lineage>
</organism>
<protein>
    <recommendedName>
        <fullName>Cx9C motif-containing protein 4, mitochondrial</fullName>
    </recommendedName>
    <alternativeName>
        <fullName>Transcripts altered in meiosis protein 2</fullName>
    </alternativeName>
</protein>
<keyword id="KW-1015">Disulfide bond</keyword>
<keyword id="KW-0496">Mitochondrion</keyword>
<keyword id="KW-1185">Reference proteome</keyword>
<keyword id="KW-0677">Repeat</keyword>
<gene>
    <name type="primary">cmc4</name>
    <name type="synonym">tam2</name>
    <name type="ORF">SPAC4F10.22</name>
</gene>
<reference key="1">
    <citation type="journal article" date="2002" name="Nature">
        <title>The genome sequence of Schizosaccharomyces pombe.</title>
        <authorList>
            <person name="Wood V."/>
            <person name="Gwilliam R."/>
            <person name="Rajandream M.A."/>
            <person name="Lyne M.H."/>
            <person name="Lyne R."/>
            <person name="Stewart A."/>
            <person name="Sgouros J.G."/>
            <person name="Peat N."/>
            <person name="Hayles J."/>
            <person name="Baker S.G."/>
            <person name="Basham D."/>
            <person name="Bowman S."/>
            <person name="Brooks K."/>
            <person name="Brown D."/>
            <person name="Brown S."/>
            <person name="Chillingworth T."/>
            <person name="Churcher C.M."/>
            <person name="Collins M."/>
            <person name="Connor R."/>
            <person name="Cronin A."/>
            <person name="Davis P."/>
            <person name="Feltwell T."/>
            <person name="Fraser A."/>
            <person name="Gentles S."/>
            <person name="Goble A."/>
            <person name="Hamlin N."/>
            <person name="Harris D.E."/>
            <person name="Hidalgo J."/>
            <person name="Hodgson G."/>
            <person name="Holroyd S."/>
            <person name="Hornsby T."/>
            <person name="Howarth S."/>
            <person name="Huckle E.J."/>
            <person name="Hunt S."/>
            <person name="Jagels K."/>
            <person name="James K.D."/>
            <person name="Jones L."/>
            <person name="Jones M."/>
            <person name="Leather S."/>
            <person name="McDonald S."/>
            <person name="McLean J."/>
            <person name="Mooney P."/>
            <person name="Moule S."/>
            <person name="Mungall K.L."/>
            <person name="Murphy L.D."/>
            <person name="Niblett D."/>
            <person name="Odell C."/>
            <person name="Oliver K."/>
            <person name="O'Neil S."/>
            <person name="Pearson D."/>
            <person name="Quail M.A."/>
            <person name="Rabbinowitsch E."/>
            <person name="Rutherford K.M."/>
            <person name="Rutter S."/>
            <person name="Saunders D."/>
            <person name="Seeger K."/>
            <person name="Sharp S."/>
            <person name="Skelton J."/>
            <person name="Simmonds M.N."/>
            <person name="Squares R."/>
            <person name="Squares S."/>
            <person name="Stevens K."/>
            <person name="Taylor K."/>
            <person name="Taylor R.G."/>
            <person name="Tivey A."/>
            <person name="Walsh S.V."/>
            <person name="Warren T."/>
            <person name="Whitehead S."/>
            <person name="Woodward J.R."/>
            <person name="Volckaert G."/>
            <person name="Aert R."/>
            <person name="Robben J."/>
            <person name="Grymonprez B."/>
            <person name="Weltjens I."/>
            <person name="Vanstreels E."/>
            <person name="Rieger M."/>
            <person name="Schaefer M."/>
            <person name="Mueller-Auer S."/>
            <person name="Gabel C."/>
            <person name="Fuchs M."/>
            <person name="Duesterhoeft A."/>
            <person name="Fritzc C."/>
            <person name="Holzer E."/>
            <person name="Moestl D."/>
            <person name="Hilbert H."/>
            <person name="Borzym K."/>
            <person name="Langer I."/>
            <person name="Beck A."/>
            <person name="Lehrach H."/>
            <person name="Reinhardt R."/>
            <person name="Pohl T.M."/>
            <person name="Eger P."/>
            <person name="Zimmermann W."/>
            <person name="Wedler H."/>
            <person name="Wambutt R."/>
            <person name="Purnelle B."/>
            <person name="Goffeau A."/>
            <person name="Cadieu E."/>
            <person name="Dreano S."/>
            <person name="Gloux S."/>
            <person name="Lelaure V."/>
            <person name="Mottier S."/>
            <person name="Galibert F."/>
            <person name="Aves S.J."/>
            <person name="Xiang Z."/>
            <person name="Hunt C."/>
            <person name="Moore K."/>
            <person name="Hurst S.M."/>
            <person name="Lucas M."/>
            <person name="Rochet M."/>
            <person name="Gaillardin C."/>
            <person name="Tallada V.A."/>
            <person name="Garzon A."/>
            <person name="Thode G."/>
            <person name="Daga R.R."/>
            <person name="Cruzado L."/>
            <person name="Jimenez J."/>
            <person name="Sanchez M."/>
            <person name="del Rey F."/>
            <person name="Benito J."/>
            <person name="Dominguez A."/>
            <person name="Revuelta J.L."/>
            <person name="Moreno S."/>
            <person name="Armstrong J."/>
            <person name="Forsburg S.L."/>
            <person name="Cerutti L."/>
            <person name="Lowe T."/>
            <person name="McCombie W.R."/>
            <person name="Paulsen I."/>
            <person name="Potashkin J."/>
            <person name="Shpakovski G.V."/>
            <person name="Ussery D."/>
            <person name="Barrell B.G."/>
            <person name="Nurse P."/>
        </authorList>
    </citation>
    <scope>NUCLEOTIDE SEQUENCE [LARGE SCALE GENOMIC DNA]</scope>
    <source>
        <strain>972 / ATCC 24843</strain>
    </source>
</reference>
<reference key="2">
    <citation type="journal article" date="2011" name="Genetics">
        <title>Augmented annotation of the Schizosaccharomyces pombe genome reveals additional genes required for growth and viability.</title>
        <authorList>
            <person name="Bitton D.A."/>
            <person name="Wood V."/>
            <person name="Scutt P.J."/>
            <person name="Grallert A."/>
            <person name="Yates T."/>
            <person name="Smith D.L."/>
            <person name="Hagan I.M."/>
            <person name="Miller C.J."/>
        </authorList>
    </citation>
    <scope>IDENTIFICATION BY MASS SPECTROMETRY</scope>
    <scope>INDUCTION</scope>
</reference>
<name>CMC4_SCHPO</name>
<sequence length="70" mass="8119">MVDCQKEACNLQSCIQRNQYNQGNCEKFVNDLLLCCKRWYDKNSLTGNEAPHTCPELKPLLRQLSSRNLT</sequence>
<feature type="chain" id="PRO_0000416511" description="Cx9C motif-containing protein 4, mitochondrial">
    <location>
        <begin position="1"/>
        <end position="70"/>
    </location>
</feature>
<feature type="domain" description="CHCH" evidence="2">
    <location>
        <begin position="1"/>
        <end position="43"/>
    </location>
</feature>
<feature type="short sequence motif" description="Cx9C motif 1" evidence="2">
    <location>
        <begin position="4"/>
        <end position="14"/>
    </location>
</feature>
<feature type="short sequence motif" description="Cx9C motif 2" evidence="2">
    <location>
        <begin position="25"/>
        <end position="35"/>
    </location>
</feature>
<feature type="disulfide bond" evidence="2">
    <location>
        <begin position="4"/>
        <end position="35"/>
    </location>
</feature>
<feature type="disulfide bond" evidence="2">
    <location>
        <begin position="14"/>
        <end position="25"/>
    </location>
</feature>
<evidence type="ECO:0000250" key="1"/>
<evidence type="ECO:0000255" key="2">
    <source>
        <dbReference type="PROSITE-ProRule" id="PRU01150"/>
    </source>
</evidence>
<evidence type="ECO:0000269" key="3">
    <source>
    </source>
</evidence>
<evidence type="ECO:0000305" key="4"/>
<accession>G2TRJ8</accession>